<dbReference type="EC" id="4.2.1.33" evidence="1"/>
<dbReference type="EMBL" id="AE006641">
    <property type="protein sequence ID" value="AAK42608.1"/>
    <property type="molecule type" value="Genomic_DNA"/>
</dbReference>
<dbReference type="PIR" id="A99419">
    <property type="entry name" value="A99419"/>
</dbReference>
<dbReference type="SMR" id="Q97VY2"/>
<dbReference type="FunCoup" id="Q97VY2">
    <property type="interactions" value="209"/>
</dbReference>
<dbReference type="STRING" id="273057.SSO2471"/>
<dbReference type="PaxDb" id="273057-SSO2471"/>
<dbReference type="EnsemblBacteria" id="AAK42608">
    <property type="protein sequence ID" value="AAK42608"/>
    <property type="gene ID" value="SSO2471"/>
</dbReference>
<dbReference type="KEGG" id="sso:SSO2471"/>
<dbReference type="PATRIC" id="fig|273057.12.peg.2548"/>
<dbReference type="eggNOG" id="arCOG01698">
    <property type="taxonomic scope" value="Archaea"/>
</dbReference>
<dbReference type="HOGENOM" id="CLU_006714_3_4_2"/>
<dbReference type="InParanoid" id="Q97VY2"/>
<dbReference type="PhylomeDB" id="Q97VY2"/>
<dbReference type="UniPathway" id="UPA00048">
    <property type="reaction ID" value="UER00071"/>
</dbReference>
<dbReference type="Proteomes" id="UP000001974">
    <property type="component" value="Chromosome"/>
</dbReference>
<dbReference type="GO" id="GO:0003861">
    <property type="term" value="F:3-isopropylmalate dehydratase activity"/>
    <property type="evidence" value="ECO:0007669"/>
    <property type="project" value="UniProtKB-UniRule"/>
</dbReference>
<dbReference type="GO" id="GO:0051539">
    <property type="term" value="F:4 iron, 4 sulfur cluster binding"/>
    <property type="evidence" value="ECO:0007669"/>
    <property type="project" value="UniProtKB-KW"/>
</dbReference>
<dbReference type="GO" id="GO:0046872">
    <property type="term" value="F:metal ion binding"/>
    <property type="evidence" value="ECO:0007669"/>
    <property type="project" value="UniProtKB-KW"/>
</dbReference>
<dbReference type="GO" id="GO:0009098">
    <property type="term" value="P:L-leucine biosynthetic process"/>
    <property type="evidence" value="ECO:0007669"/>
    <property type="project" value="UniProtKB-UniRule"/>
</dbReference>
<dbReference type="CDD" id="cd01583">
    <property type="entry name" value="IPMI"/>
    <property type="match status" value="1"/>
</dbReference>
<dbReference type="Gene3D" id="3.30.499.10">
    <property type="entry name" value="Aconitase, domain 3"/>
    <property type="match status" value="2"/>
</dbReference>
<dbReference type="HAMAP" id="MF_01027">
    <property type="entry name" value="LeuC_type2"/>
    <property type="match status" value="1"/>
</dbReference>
<dbReference type="InterPro" id="IPR015931">
    <property type="entry name" value="Acnase/IPM_dHydase_lsu_aba_1/3"/>
</dbReference>
<dbReference type="InterPro" id="IPR001030">
    <property type="entry name" value="Acoase/IPM_deHydtase_lsu_aba"/>
</dbReference>
<dbReference type="InterPro" id="IPR018136">
    <property type="entry name" value="Aconitase_4Fe-4S_BS"/>
</dbReference>
<dbReference type="InterPro" id="IPR036008">
    <property type="entry name" value="Aconitase_4Fe-4S_dom"/>
</dbReference>
<dbReference type="InterPro" id="IPR011826">
    <property type="entry name" value="HAcnase/IPMdehydase_lsu_prok"/>
</dbReference>
<dbReference type="InterPro" id="IPR006251">
    <property type="entry name" value="Homoacnase/IPMdehydase_lsu"/>
</dbReference>
<dbReference type="InterPro" id="IPR050067">
    <property type="entry name" value="IPM_dehydratase_rel_enz"/>
</dbReference>
<dbReference type="InterPro" id="IPR033941">
    <property type="entry name" value="IPMI_cat"/>
</dbReference>
<dbReference type="NCBIfam" id="TIGR01343">
    <property type="entry name" value="hacA_fam"/>
    <property type="match status" value="1"/>
</dbReference>
<dbReference type="NCBIfam" id="TIGR02086">
    <property type="entry name" value="IPMI_arch"/>
    <property type="match status" value="1"/>
</dbReference>
<dbReference type="NCBIfam" id="NF001614">
    <property type="entry name" value="PRK00402.1"/>
    <property type="match status" value="1"/>
</dbReference>
<dbReference type="PANTHER" id="PTHR43822:SF2">
    <property type="entry name" value="HOMOACONITASE, MITOCHONDRIAL"/>
    <property type="match status" value="1"/>
</dbReference>
<dbReference type="PANTHER" id="PTHR43822">
    <property type="entry name" value="HOMOACONITASE, MITOCHONDRIAL-RELATED"/>
    <property type="match status" value="1"/>
</dbReference>
<dbReference type="Pfam" id="PF00330">
    <property type="entry name" value="Aconitase"/>
    <property type="match status" value="2"/>
</dbReference>
<dbReference type="PRINTS" id="PR00415">
    <property type="entry name" value="ACONITASE"/>
</dbReference>
<dbReference type="SUPFAM" id="SSF53732">
    <property type="entry name" value="Aconitase iron-sulfur domain"/>
    <property type="match status" value="1"/>
</dbReference>
<dbReference type="PROSITE" id="PS01244">
    <property type="entry name" value="ACONITASE_2"/>
    <property type="match status" value="1"/>
</dbReference>
<gene>
    <name evidence="1" type="primary">leuC</name>
    <name type="ordered locus">SSO2471</name>
</gene>
<feature type="chain" id="PRO_0000076885" description="3-isopropylmalate dehydratase large subunit">
    <location>
        <begin position="1"/>
        <end position="416"/>
    </location>
</feature>
<feature type="binding site" evidence="1">
    <location>
        <position position="299"/>
    </location>
    <ligand>
        <name>[4Fe-4S] cluster</name>
        <dbReference type="ChEBI" id="CHEBI:49883"/>
    </ligand>
</feature>
<feature type="binding site" evidence="1">
    <location>
        <position position="357"/>
    </location>
    <ligand>
        <name>[4Fe-4S] cluster</name>
        <dbReference type="ChEBI" id="CHEBI:49883"/>
    </ligand>
</feature>
<feature type="binding site" evidence="1">
    <location>
        <position position="360"/>
    </location>
    <ligand>
        <name>[4Fe-4S] cluster</name>
        <dbReference type="ChEBI" id="CHEBI:49883"/>
    </ligand>
</feature>
<organism>
    <name type="scientific">Saccharolobus solfataricus (strain ATCC 35092 / DSM 1617 / JCM 11322 / P2)</name>
    <name type="common">Sulfolobus solfataricus</name>
    <dbReference type="NCBI Taxonomy" id="273057"/>
    <lineage>
        <taxon>Archaea</taxon>
        <taxon>Thermoproteota</taxon>
        <taxon>Thermoprotei</taxon>
        <taxon>Sulfolobales</taxon>
        <taxon>Sulfolobaceae</taxon>
        <taxon>Saccharolobus</taxon>
    </lineage>
</organism>
<protein>
    <recommendedName>
        <fullName evidence="1">3-isopropylmalate dehydratase large subunit</fullName>
        <ecNumber evidence="1">4.2.1.33</ecNumber>
    </recommendedName>
    <alternativeName>
        <fullName evidence="1">Alpha-IPM isomerase</fullName>
        <shortName evidence="1">IPMI</shortName>
    </alternativeName>
    <alternativeName>
        <fullName evidence="1">Isopropylmalate isomerase</fullName>
    </alternativeName>
</protein>
<reference key="1">
    <citation type="journal article" date="2001" name="Proc. Natl. Acad. Sci. U.S.A.">
        <title>The complete genome of the crenarchaeon Sulfolobus solfataricus P2.</title>
        <authorList>
            <person name="She Q."/>
            <person name="Singh R.K."/>
            <person name="Confalonieri F."/>
            <person name="Zivanovic Y."/>
            <person name="Allard G."/>
            <person name="Awayez M.J."/>
            <person name="Chan-Weiher C.C.-Y."/>
            <person name="Clausen I.G."/>
            <person name="Curtis B.A."/>
            <person name="De Moors A."/>
            <person name="Erauso G."/>
            <person name="Fletcher C."/>
            <person name="Gordon P.M.K."/>
            <person name="Heikamp-de Jong I."/>
            <person name="Jeffries A.C."/>
            <person name="Kozera C.J."/>
            <person name="Medina N."/>
            <person name="Peng X."/>
            <person name="Thi-Ngoc H.P."/>
            <person name="Redder P."/>
            <person name="Schenk M.E."/>
            <person name="Theriault C."/>
            <person name="Tolstrup N."/>
            <person name="Charlebois R.L."/>
            <person name="Doolittle W.F."/>
            <person name="Duguet M."/>
            <person name="Gaasterland T."/>
            <person name="Garrett R.A."/>
            <person name="Ragan M.A."/>
            <person name="Sensen C.W."/>
            <person name="Van der Oost J."/>
        </authorList>
    </citation>
    <scope>NUCLEOTIDE SEQUENCE [LARGE SCALE GENOMIC DNA]</scope>
    <source>
        <strain>ATCC 35092 / DSM 1617 / JCM 11322 / P2</strain>
    </source>
</reference>
<name>LEUC_SACS2</name>
<comment type="function">
    <text evidence="1">Catalyzes the isomerization between 2-isopropylmalate and 3-isopropylmalate, via the formation of 2-isopropylmaleate.</text>
</comment>
<comment type="catalytic activity">
    <reaction evidence="1">
        <text>(2R,3S)-3-isopropylmalate = (2S)-2-isopropylmalate</text>
        <dbReference type="Rhea" id="RHEA:32287"/>
        <dbReference type="ChEBI" id="CHEBI:1178"/>
        <dbReference type="ChEBI" id="CHEBI:35121"/>
        <dbReference type="EC" id="4.2.1.33"/>
    </reaction>
</comment>
<comment type="cofactor">
    <cofactor evidence="1">
        <name>[4Fe-4S] cluster</name>
        <dbReference type="ChEBI" id="CHEBI:49883"/>
    </cofactor>
    <text evidence="1">Binds 1 [4Fe-4S] cluster per subunit.</text>
</comment>
<comment type="pathway">
    <text evidence="1">Amino-acid biosynthesis; L-leucine biosynthesis; L-leucine from 3-methyl-2-oxobutanoate: step 2/4.</text>
</comment>
<comment type="subunit">
    <text evidence="1">Heterodimer of LeuC and LeuD.</text>
</comment>
<comment type="similarity">
    <text evidence="1">Belongs to the aconitase/IPM isomerase family. LeuC type 2 subfamily.</text>
</comment>
<evidence type="ECO:0000255" key="1">
    <source>
        <dbReference type="HAMAP-Rule" id="MF_01027"/>
    </source>
</evidence>
<sequence>MMSAKTLTEKILSRASGKDVSPGDVIEAKVDLVAFHDLTGYHVIEVMEKANMIKVFDKSKLVIAFDHLAPPPDVRSAEIQGYIRKFVKSEGIPNFYDINYGILHEVMIEQYANPGQVILAADSHTTTSGAVGAFAQGMGASDIAAALITGKTWLVVPQPFKVVLEGKPAKWITGKDVALKLLGDFKADYFNGMTLEIFVKDPLSFPMDYRATVSNMGIEMNADALMFIPDQETKRYIKEMRGYEPELVTPDNGAKYVDEYTIQLDEMEPLVAAPHSVDNVKVVNELEGTPVDQVYIGSCTNGRLSDFEIAAKIMKGKKVKSRCIAIPASYRMFKEALERGYIQTLVDAGCIVTYGTCGPCLGGHFGIAGPGENIVSTSSRNFKGRMGSNEAKVYLSGPAVAAISALEGKITDPRVI</sequence>
<keyword id="KW-0004">4Fe-4S</keyword>
<keyword id="KW-0028">Amino-acid biosynthesis</keyword>
<keyword id="KW-0100">Branched-chain amino acid biosynthesis</keyword>
<keyword id="KW-0408">Iron</keyword>
<keyword id="KW-0411">Iron-sulfur</keyword>
<keyword id="KW-0432">Leucine biosynthesis</keyword>
<keyword id="KW-0456">Lyase</keyword>
<keyword id="KW-0479">Metal-binding</keyword>
<keyword id="KW-1185">Reference proteome</keyword>
<accession>Q97VY2</accession>
<proteinExistence type="inferred from homology"/>